<dbReference type="EC" id="1.3.1.25"/>
<dbReference type="EMBL" id="AF009224">
    <property type="protein sequence ID" value="AAC46439.1"/>
    <property type="molecule type" value="Genomic_DNA"/>
</dbReference>
<dbReference type="EMBL" id="CR543861">
    <property type="protein sequence ID" value="CAG68303.1"/>
    <property type="molecule type" value="Genomic_DNA"/>
</dbReference>
<dbReference type="PIR" id="S23480">
    <property type="entry name" value="S23480"/>
</dbReference>
<dbReference type="RefSeq" id="WP_004925479.1">
    <property type="nucleotide sequence ID" value="NC_005966.1"/>
</dbReference>
<dbReference type="SMR" id="P07772"/>
<dbReference type="STRING" id="202950.GCA_001485005_01194"/>
<dbReference type="GeneID" id="45233852"/>
<dbReference type="KEGG" id="aci:ACIAD1439"/>
<dbReference type="eggNOG" id="COG1028">
    <property type="taxonomic scope" value="Bacteria"/>
</dbReference>
<dbReference type="HOGENOM" id="CLU_010194_1_2_6"/>
<dbReference type="OrthoDB" id="9803333at2"/>
<dbReference type="BioCyc" id="ASP62977:ACIAD_RS06650-MONOMER"/>
<dbReference type="UniPathway" id="UPA00156">
    <property type="reaction ID" value="UER00255"/>
</dbReference>
<dbReference type="Proteomes" id="UP000000430">
    <property type="component" value="Chromosome"/>
</dbReference>
<dbReference type="GO" id="GO:0047116">
    <property type="term" value="F:1,6-dihydroxycyclohexa-2,4-diene-1-carboxylate dehydrogenase activity"/>
    <property type="evidence" value="ECO:0007669"/>
    <property type="project" value="UniProtKB-EC"/>
</dbReference>
<dbReference type="GO" id="GO:0016616">
    <property type="term" value="F:oxidoreductase activity, acting on the CH-OH group of donors, NAD or NADP as acceptor"/>
    <property type="evidence" value="ECO:0007669"/>
    <property type="project" value="TreeGrafter"/>
</dbReference>
<dbReference type="GO" id="GO:0043640">
    <property type="term" value="P:benzoate catabolic process via hydroxylation"/>
    <property type="evidence" value="ECO:0007669"/>
    <property type="project" value="UniProtKB-UniPathway"/>
</dbReference>
<dbReference type="GO" id="GO:0030497">
    <property type="term" value="P:fatty acid elongation"/>
    <property type="evidence" value="ECO:0007669"/>
    <property type="project" value="TreeGrafter"/>
</dbReference>
<dbReference type="CDD" id="cd08937">
    <property type="entry name" value="DHB_DH-like_SDR_c"/>
    <property type="match status" value="1"/>
</dbReference>
<dbReference type="FunFam" id="3.40.50.720:FF:000084">
    <property type="entry name" value="Short-chain dehydrogenase reductase"/>
    <property type="match status" value="1"/>
</dbReference>
<dbReference type="Gene3D" id="3.40.50.720">
    <property type="entry name" value="NAD(P)-binding Rossmann-like Domain"/>
    <property type="match status" value="1"/>
</dbReference>
<dbReference type="InterPro" id="IPR047686">
    <property type="entry name" value="BenD"/>
</dbReference>
<dbReference type="InterPro" id="IPR036291">
    <property type="entry name" value="NAD(P)-bd_dom_sf"/>
</dbReference>
<dbReference type="InterPro" id="IPR020904">
    <property type="entry name" value="Sc_DH/Rdtase_CS"/>
</dbReference>
<dbReference type="InterPro" id="IPR002347">
    <property type="entry name" value="SDR_fam"/>
</dbReference>
<dbReference type="NCBIfam" id="NF040811">
    <property type="entry name" value="BenD"/>
    <property type="match status" value="1"/>
</dbReference>
<dbReference type="NCBIfam" id="NF009463">
    <property type="entry name" value="PRK12823.1"/>
    <property type="match status" value="1"/>
</dbReference>
<dbReference type="PANTHER" id="PTHR42760:SF123">
    <property type="entry name" value="OXIDOREDUCTASE"/>
    <property type="match status" value="1"/>
</dbReference>
<dbReference type="PANTHER" id="PTHR42760">
    <property type="entry name" value="SHORT-CHAIN DEHYDROGENASES/REDUCTASES FAMILY MEMBER"/>
    <property type="match status" value="1"/>
</dbReference>
<dbReference type="Pfam" id="PF00106">
    <property type="entry name" value="adh_short"/>
    <property type="match status" value="1"/>
</dbReference>
<dbReference type="PRINTS" id="PR00081">
    <property type="entry name" value="GDHRDH"/>
</dbReference>
<dbReference type="PRINTS" id="PR00080">
    <property type="entry name" value="SDRFAMILY"/>
</dbReference>
<dbReference type="SUPFAM" id="SSF51735">
    <property type="entry name" value="NAD(P)-binding Rossmann-fold domains"/>
    <property type="match status" value="1"/>
</dbReference>
<dbReference type="PROSITE" id="PS00061">
    <property type="entry name" value="ADH_SHORT"/>
    <property type="match status" value="1"/>
</dbReference>
<proteinExistence type="inferred from homology"/>
<comment type="function">
    <text>Degradation of 2-hydro-1,2-dihydroxy benzoate (DHB) to catechol.</text>
</comment>
<comment type="catalytic activity">
    <reaction>
        <text>(1R,6S)-1,6-dihydroxycyclohexa-2,4-diene-1-carboxylate + NAD(+) = catechol + CO2 + NADH</text>
        <dbReference type="Rhea" id="RHEA:11560"/>
        <dbReference type="ChEBI" id="CHEBI:16526"/>
        <dbReference type="ChEBI" id="CHEBI:18135"/>
        <dbReference type="ChEBI" id="CHEBI:57540"/>
        <dbReference type="ChEBI" id="CHEBI:57945"/>
        <dbReference type="ChEBI" id="CHEBI:60129"/>
        <dbReference type="EC" id="1.3.1.25"/>
    </reaction>
</comment>
<comment type="pathway">
    <text>Aromatic compound metabolism; benzoate degradation via hydroxylation; catechol from benzoate: step 2/2.</text>
</comment>
<comment type="subunit">
    <text>Homodimer.</text>
</comment>
<comment type="similarity">
    <text evidence="3">Belongs to the short-chain dehydrogenases/reductases (SDR) family.</text>
</comment>
<evidence type="ECO:0000250" key="1"/>
<evidence type="ECO:0000255" key="2">
    <source>
        <dbReference type="PROSITE-ProRule" id="PRU10001"/>
    </source>
</evidence>
<evidence type="ECO:0000305" key="3"/>
<sequence>MNSTQRFEHKVVIVTGAAQGIGRGVALRIAQEGGCLILADRSDLIQAVLAEIKALGALAIAVETDLETYAGAELVVSHAIAEYGRIDVLINNVGGAIWMKPFQEFSEEEIIQEVHRSLFPALWCCRAVLPEMLKHQQGTIVNVSSIATRGIHRIPYSASKGGVNALTASLAFEHAQHGIRVNAVATGGTKAPPRKIPRNAQPLSKSEQVWMQQVVDQTIDRSFLGRYGSIDEQVNAITFLASDESSYITGSVLPVGGGDQG</sequence>
<name>BEND_ACIAD</name>
<accession>P07772</accession>
<accession>Q6FCA8</accession>
<gene>
    <name type="primary">benD</name>
    <name type="ordered locus">ACIAD1439</name>
</gene>
<keyword id="KW-0058">Aromatic hydrocarbons catabolism</keyword>
<keyword id="KW-0520">NAD</keyword>
<keyword id="KW-0560">Oxidoreductase</keyword>
<feature type="chain" id="PRO_0000054529" description="1,6-dihydroxycyclohexa-2,4-diene-1-carboxylate dehydrogenase">
    <location>
        <begin position="1"/>
        <end position="261"/>
    </location>
</feature>
<feature type="active site" description="Proton acceptor" evidence="2">
    <location>
        <position position="156"/>
    </location>
</feature>
<feature type="binding site" evidence="1">
    <location>
        <begin position="13"/>
        <end position="37"/>
    </location>
    <ligand>
        <name>NAD(+)</name>
        <dbReference type="ChEBI" id="CHEBI:57540"/>
    </ligand>
</feature>
<feature type="binding site" evidence="1">
    <location>
        <position position="145"/>
    </location>
    <ligand>
        <name>substrate</name>
    </ligand>
</feature>
<feature type="sequence conflict" description="In Ref. 1; AAC46439." evidence="3" ref="1">
    <original>S</original>
    <variation>C</variation>
    <location>
        <position position="159"/>
    </location>
</feature>
<protein>
    <recommendedName>
        <fullName>1,6-dihydroxycyclohexa-2,4-diene-1-carboxylate dehydrogenase</fullName>
        <ecNumber>1.3.1.25</ecNumber>
    </recommendedName>
    <alternativeName>
        <fullName>2-hydro-1,2-dihydroxybenzoate dehydrogenase</fullName>
        <shortName>DHB dehydrogenase</shortName>
    </alternativeName>
    <alternativeName>
        <fullName>Cis-1,2-dihydroxy-3,4-cyclohexadiene-1-carboxylate dehydrogenase</fullName>
    </alternativeName>
    <alternativeName>
        <fullName>Cis-1,2-dihydroxycyclohexa-3,5-diene-1-carboxylate dehydrogenase</fullName>
    </alternativeName>
</protein>
<organism>
    <name type="scientific">Acinetobacter baylyi (strain ATCC 33305 / BD413 / ADP1)</name>
    <dbReference type="NCBI Taxonomy" id="62977"/>
    <lineage>
        <taxon>Bacteria</taxon>
        <taxon>Pseudomonadati</taxon>
        <taxon>Pseudomonadota</taxon>
        <taxon>Gammaproteobacteria</taxon>
        <taxon>Moraxellales</taxon>
        <taxon>Moraxellaceae</taxon>
        <taxon>Acinetobacter</taxon>
    </lineage>
</organism>
<reference key="1">
    <citation type="journal article" date="1992" name="Eur. J. Biochem.">
        <title>Cis-diol dehydrogenases encoded by the TOL pWW0 plasmid xylL gene and the Acinetobacter calcoaceticus chromosomal benD gene are members of the short-chain alcohol dehydrogenase superfamily.</title>
        <authorList>
            <person name="Neidle E.L."/>
            <person name="Hartnett C."/>
            <person name="Ornston L.N."/>
            <person name="Bairoch A."/>
            <person name="Rekik M."/>
            <person name="Harayama S."/>
        </authorList>
    </citation>
    <scope>NUCLEOTIDE SEQUENCE [GENOMIC DNA]</scope>
</reference>
<reference key="2">
    <citation type="journal article" date="2004" name="Nucleic Acids Res.">
        <title>Unique features revealed by the genome sequence of Acinetobacter sp. ADP1, a versatile and naturally transformation competent bacterium.</title>
        <authorList>
            <person name="Barbe V."/>
            <person name="Vallenet D."/>
            <person name="Fonknechten N."/>
            <person name="Kreimeyer A."/>
            <person name="Oztas S."/>
            <person name="Labarre L."/>
            <person name="Cruveiller S."/>
            <person name="Robert C."/>
            <person name="Duprat S."/>
            <person name="Wincker P."/>
            <person name="Ornston L.N."/>
            <person name="Weissenbach J."/>
            <person name="Marliere P."/>
            <person name="Cohen G.N."/>
            <person name="Medigue C."/>
        </authorList>
    </citation>
    <scope>NUCLEOTIDE SEQUENCE [LARGE SCALE GENOMIC DNA]</scope>
    <source>
        <strain>ATCC 33305 / BD413 / ADP1</strain>
    </source>
</reference>